<feature type="chain" id="PRO_0000289402" description="Lipoprotein signal peptidase">
    <location>
        <begin position="1"/>
        <end position="304"/>
    </location>
</feature>
<feature type="transmembrane region" description="Helical" evidence="1">
    <location>
        <begin position="28"/>
        <end position="48"/>
    </location>
</feature>
<feature type="transmembrane region" description="Helical" evidence="1">
    <location>
        <begin position="86"/>
        <end position="106"/>
    </location>
</feature>
<feature type="transmembrane region" description="Helical" evidence="1">
    <location>
        <begin position="112"/>
        <end position="132"/>
    </location>
</feature>
<feature type="transmembrane region" description="Helical" evidence="1">
    <location>
        <begin position="163"/>
        <end position="183"/>
    </location>
</feature>
<feature type="active site" evidence="1">
    <location>
        <position position="148"/>
    </location>
</feature>
<feature type="active site" evidence="1">
    <location>
        <position position="163"/>
    </location>
</feature>
<protein>
    <recommendedName>
        <fullName evidence="1">Lipoprotein signal peptidase</fullName>
        <ecNumber evidence="1">3.4.23.36</ecNumber>
    </recommendedName>
    <alternativeName>
        <fullName evidence="1">Prolipoprotein signal peptidase</fullName>
    </alternativeName>
    <alternativeName>
        <fullName evidence="1">Signal peptidase II</fullName>
        <shortName evidence="1">SPase II</shortName>
    </alternativeName>
</protein>
<reference key="1">
    <citation type="journal article" date="2003" name="Microbiology">
        <title>The complete genome sequence of the avian pathogen Mycoplasma gallisepticum strain R(low).</title>
        <authorList>
            <person name="Papazisi L."/>
            <person name="Gorton T.S."/>
            <person name="Kutish G."/>
            <person name="Markham P.F."/>
            <person name="Browning G.F."/>
            <person name="Nguyen D.K."/>
            <person name="Swartzell S."/>
            <person name="Madan A."/>
            <person name="Mahairas G."/>
            <person name="Geary S.J."/>
        </authorList>
    </citation>
    <scope>NUCLEOTIDE SEQUENCE [LARGE SCALE GENOMIC DNA]</scope>
    <source>
        <strain>R(low / passage 15 / clone 2)</strain>
    </source>
</reference>
<accession>Q7NBQ3</accession>
<name>LSPA_MYCGA</name>
<sequence length="304" mass="34606">MYTFKRYLTKTKDTLIRQFKAANAKKLIKIKYPILAVMGFFVLLIVFVLRDYFLKLGIGHSTSTGFITINVITNSGVGFSLFNQNPAVPYLLQSLLTIIFLITFIFSKNKALIVLLPLITFGGLANVIDRSVPVTLSNGTVETNSVLDYFQFFRSSAIFNFADICIVTGFALIFLTFVVDIFLDLKKKNKKTVSTTNKQLHGWKSIPLEERSKWNDWADHKCVFCNQQMMINSNEVICSNEECAYIDLINIAKPISVEKQENCLICNSEMIKKVDDKQASFLACSRFNEKCYYTKSCKQIENNA</sequence>
<dbReference type="EC" id="3.4.23.36" evidence="1"/>
<dbReference type="EMBL" id="AE015450">
    <property type="protein sequence ID" value="AAP56560.1"/>
    <property type="molecule type" value="Genomic_DNA"/>
</dbReference>
<dbReference type="RefSeq" id="WP_011113449.1">
    <property type="nucleotide sequence ID" value="NC_004829.2"/>
</dbReference>
<dbReference type="SMR" id="Q7NBQ3"/>
<dbReference type="KEGG" id="mga:MGA_0997"/>
<dbReference type="PATRIC" id="fig|233150.7.peg.232"/>
<dbReference type="HOGENOM" id="CLU_914725_0_0_14"/>
<dbReference type="OrthoDB" id="401384at2"/>
<dbReference type="UniPathway" id="UPA00665"/>
<dbReference type="Proteomes" id="UP000001418">
    <property type="component" value="Chromosome"/>
</dbReference>
<dbReference type="GO" id="GO:0005886">
    <property type="term" value="C:plasma membrane"/>
    <property type="evidence" value="ECO:0007669"/>
    <property type="project" value="UniProtKB-SubCell"/>
</dbReference>
<dbReference type="GO" id="GO:0004190">
    <property type="term" value="F:aspartic-type endopeptidase activity"/>
    <property type="evidence" value="ECO:0007669"/>
    <property type="project" value="UniProtKB-UniRule"/>
</dbReference>
<dbReference type="GO" id="GO:0006508">
    <property type="term" value="P:proteolysis"/>
    <property type="evidence" value="ECO:0007669"/>
    <property type="project" value="UniProtKB-KW"/>
</dbReference>
<dbReference type="Gene3D" id="3.30.65.10">
    <property type="entry name" value="Bacterial Topoisomerase I, domain 1"/>
    <property type="match status" value="1"/>
</dbReference>
<dbReference type="HAMAP" id="MF_00161">
    <property type="entry name" value="LspA"/>
    <property type="match status" value="1"/>
</dbReference>
<dbReference type="InterPro" id="IPR001872">
    <property type="entry name" value="Peptidase_A8"/>
</dbReference>
<dbReference type="PANTHER" id="PTHR33695">
    <property type="entry name" value="LIPOPROTEIN SIGNAL PEPTIDASE"/>
    <property type="match status" value="1"/>
</dbReference>
<dbReference type="PANTHER" id="PTHR33695:SF1">
    <property type="entry name" value="LIPOPROTEIN SIGNAL PEPTIDASE"/>
    <property type="match status" value="1"/>
</dbReference>
<dbReference type="Pfam" id="PF01252">
    <property type="entry name" value="Peptidase_A8"/>
    <property type="match status" value="1"/>
</dbReference>
<dbReference type="PRINTS" id="PR00781">
    <property type="entry name" value="LIPOSIGPTASE"/>
</dbReference>
<evidence type="ECO:0000255" key="1">
    <source>
        <dbReference type="HAMAP-Rule" id="MF_00161"/>
    </source>
</evidence>
<organism>
    <name type="scientific">Mycoplasmoides gallisepticum (strain R(low / passage 15 / clone 2))</name>
    <name type="common">Mycoplasma gallisepticum</name>
    <dbReference type="NCBI Taxonomy" id="710127"/>
    <lineage>
        <taxon>Bacteria</taxon>
        <taxon>Bacillati</taxon>
        <taxon>Mycoplasmatota</taxon>
        <taxon>Mycoplasmoidales</taxon>
        <taxon>Mycoplasmoidaceae</taxon>
        <taxon>Mycoplasmoides</taxon>
    </lineage>
</organism>
<proteinExistence type="inferred from homology"/>
<comment type="function">
    <text evidence="1">This protein specifically catalyzes the removal of signal peptides from prolipoproteins.</text>
</comment>
<comment type="catalytic activity">
    <reaction evidence="1">
        <text>Release of signal peptides from bacterial membrane prolipoproteins. Hydrolyzes -Xaa-Yaa-Zaa-|-(S,diacylglyceryl)Cys-, in which Xaa is hydrophobic (preferably Leu), and Yaa (Ala or Ser) and Zaa (Gly or Ala) have small, neutral side chains.</text>
        <dbReference type="EC" id="3.4.23.36"/>
    </reaction>
</comment>
<comment type="pathway">
    <text evidence="1">Protein modification; lipoprotein biosynthesis (signal peptide cleavage).</text>
</comment>
<comment type="subcellular location">
    <subcellularLocation>
        <location evidence="1">Cell membrane</location>
        <topology evidence="1">Multi-pass membrane protein</topology>
    </subcellularLocation>
</comment>
<comment type="similarity">
    <text evidence="1">Belongs to the peptidase A8 family.</text>
</comment>
<gene>
    <name evidence="1" type="primary">lspA</name>
    <name type="ordered locus">MYCGA2100</name>
    <name type="ORF">MGA_0997</name>
</gene>
<keyword id="KW-0064">Aspartyl protease</keyword>
<keyword id="KW-1003">Cell membrane</keyword>
<keyword id="KW-0378">Hydrolase</keyword>
<keyword id="KW-0472">Membrane</keyword>
<keyword id="KW-0645">Protease</keyword>
<keyword id="KW-1185">Reference proteome</keyword>
<keyword id="KW-0812">Transmembrane</keyword>
<keyword id="KW-1133">Transmembrane helix</keyword>